<protein>
    <recommendedName>
        <fullName evidence="2">Transaldolase</fullName>
        <ecNumber evidence="2">2.2.1.2</ecNumber>
    </recommendedName>
</protein>
<accession>Q8Y014</accession>
<proteinExistence type="inferred from homology"/>
<keyword id="KW-0963">Cytoplasm</keyword>
<keyword id="KW-0570">Pentose shunt</keyword>
<keyword id="KW-1185">Reference proteome</keyword>
<keyword id="KW-0704">Schiff base</keyword>
<keyword id="KW-0808">Transferase</keyword>
<evidence type="ECO:0000250" key="1"/>
<evidence type="ECO:0000255" key="2">
    <source>
        <dbReference type="HAMAP-Rule" id="MF_00492"/>
    </source>
</evidence>
<feature type="chain" id="PRO_0000173610" description="Transaldolase">
    <location>
        <begin position="1"/>
        <end position="319"/>
    </location>
</feature>
<feature type="active site" description="Schiff-base intermediate with substrate" evidence="2">
    <location>
        <position position="125"/>
    </location>
</feature>
<comment type="function">
    <text evidence="2">Transaldolase is important for the balance of metabolites in the pentose-phosphate pathway.</text>
</comment>
<comment type="catalytic activity">
    <reaction evidence="2">
        <text>D-sedoheptulose 7-phosphate + D-glyceraldehyde 3-phosphate = D-erythrose 4-phosphate + beta-D-fructose 6-phosphate</text>
        <dbReference type="Rhea" id="RHEA:17053"/>
        <dbReference type="ChEBI" id="CHEBI:16897"/>
        <dbReference type="ChEBI" id="CHEBI:57483"/>
        <dbReference type="ChEBI" id="CHEBI:57634"/>
        <dbReference type="ChEBI" id="CHEBI:59776"/>
        <dbReference type="EC" id="2.2.1.2"/>
    </reaction>
</comment>
<comment type="pathway">
    <text evidence="2">Carbohydrate degradation; pentose phosphate pathway; D-glyceraldehyde 3-phosphate and beta-D-fructose 6-phosphate from D-ribose 5-phosphate and D-xylulose 5-phosphate (non-oxidative stage): step 2/3.</text>
</comment>
<comment type="subunit">
    <text evidence="1">Homodimer.</text>
</comment>
<comment type="subcellular location">
    <subcellularLocation>
        <location evidence="2">Cytoplasm</location>
    </subcellularLocation>
</comment>
<comment type="similarity">
    <text evidence="2">Belongs to the transaldolase family. Type 1 subfamily.</text>
</comment>
<gene>
    <name evidence="2" type="primary">tal</name>
    <name type="ordered locus">RSc1231</name>
    <name type="ORF">RS02738</name>
</gene>
<sequence>MTQLDQLKQFTTVVADTGDFQAMRAYAPHDATTNPSLILKAVQKAEYRPLLEQAVRDARSDSVEDIIDAVLVAFGCEILSIIPGRVSTEVDARLSFDTAATVAKARHLIALYEARGVPRERVLIKIASTWEGIRAADQLRAEGIRCNMTLLFSLIQAVACAEAGVQLISPFVGRIYDWYKKDAGAAWDPIAQGGANDPGVQSVVRIYNYYKRFGYTTEVMGASFRNTSQIIELAGCDLLTISPELLAQLQQSDAPVERKLSPEHAHATNLVRLPADEAAFRWHMNADAMATEKLAEGIRLFAADAVKLEGLIGPLRAAA</sequence>
<organism>
    <name type="scientific">Ralstonia nicotianae (strain ATCC BAA-1114 / GMI1000)</name>
    <name type="common">Ralstonia solanacearum</name>
    <dbReference type="NCBI Taxonomy" id="267608"/>
    <lineage>
        <taxon>Bacteria</taxon>
        <taxon>Pseudomonadati</taxon>
        <taxon>Pseudomonadota</taxon>
        <taxon>Betaproteobacteria</taxon>
        <taxon>Burkholderiales</taxon>
        <taxon>Burkholderiaceae</taxon>
        <taxon>Ralstonia</taxon>
        <taxon>Ralstonia solanacearum species complex</taxon>
    </lineage>
</organism>
<name>TAL_RALN1</name>
<dbReference type="EC" id="2.2.1.2" evidence="2"/>
<dbReference type="EMBL" id="AL646052">
    <property type="protein sequence ID" value="CAD14933.1"/>
    <property type="molecule type" value="Genomic_DNA"/>
</dbReference>
<dbReference type="RefSeq" id="WP_011001180.1">
    <property type="nucleotide sequence ID" value="NC_003295.1"/>
</dbReference>
<dbReference type="SMR" id="Q8Y014"/>
<dbReference type="STRING" id="267608.RSc1231"/>
<dbReference type="EnsemblBacteria" id="CAD14933">
    <property type="protein sequence ID" value="CAD14933"/>
    <property type="gene ID" value="RSc1231"/>
</dbReference>
<dbReference type="KEGG" id="rso:RSc1231"/>
<dbReference type="eggNOG" id="COG0176">
    <property type="taxonomic scope" value="Bacteria"/>
</dbReference>
<dbReference type="HOGENOM" id="CLU_047470_0_1_4"/>
<dbReference type="UniPathway" id="UPA00115">
    <property type="reaction ID" value="UER00414"/>
</dbReference>
<dbReference type="Proteomes" id="UP000001436">
    <property type="component" value="Chromosome"/>
</dbReference>
<dbReference type="GO" id="GO:0005737">
    <property type="term" value="C:cytoplasm"/>
    <property type="evidence" value="ECO:0007669"/>
    <property type="project" value="UniProtKB-SubCell"/>
</dbReference>
<dbReference type="GO" id="GO:0004801">
    <property type="term" value="F:transaldolase activity"/>
    <property type="evidence" value="ECO:0000250"/>
    <property type="project" value="UniProtKB"/>
</dbReference>
<dbReference type="GO" id="GO:0005975">
    <property type="term" value="P:carbohydrate metabolic process"/>
    <property type="evidence" value="ECO:0007669"/>
    <property type="project" value="InterPro"/>
</dbReference>
<dbReference type="GO" id="GO:0006098">
    <property type="term" value="P:pentose-phosphate shunt"/>
    <property type="evidence" value="ECO:0007669"/>
    <property type="project" value="UniProtKB-UniRule"/>
</dbReference>
<dbReference type="CDD" id="cd00957">
    <property type="entry name" value="Transaldolase_TalAB"/>
    <property type="match status" value="1"/>
</dbReference>
<dbReference type="FunFam" id="3.20.20.70:FF:000002">
    <property type="entry name" value="Transaldolase"/>
    <property type="match status" value="1"/>
</dbReference>
<dbReference type="Gene3D" id="3.20.20.70">
    <property type="entry name" value="Aldolase class I"/>
    <property type="match status" value="1"/>
</dbReference>
<dbReference type="HAMAP" id="MF_00492">
    <property type="entry name" value="Transaldolase_1"/>
    <property type="match status" value="1"/>
</dbReference>
<dbReference type="InterPro" id="IPR013785">
    <property type="entry name" value="Aldolase_TIM"/>
</dbReference>
<dbReference type="InterPro" id="IPR001585">
    <property type="entry name" value="TAL/FSA"/>
</dbReference>
<dbReference type="InterPro" id="IPR004730">
    <property type="entry name" value="Transaldolase_1"/>
</dbReference>
<dbReference type="InterPro" id="IPR018225">
    <property type="entry name" value="Transaldolase_AS"/>
</dbReference>
<dbReference type="NCBIfam" id="NF009001">
    <property type="entry name" value="PRK12346.1"/>
    <property type="match status" value="1"/>
</dbReference>
<dbReference type="NCBIfam" id="TIGR00874">
    <property type="entry name" value="talAB"/>
    <property type="match status" value="1"/>
</dbReference>
<dbReference type="PANTHER" id="PTHR10683">
    <property type="entry name" value="TRANSALDOLASE"/>
    <property type="match status" value="1"/>
</dbReference>
<dbReference type="PANTHER" id="PTHR10683:SF18">
    <property type="entry name" value="TRANSALDOLASE"/>
    <property type="match status" value="1"/>
</dbReference>
<dbReference type="Pfam" id="PF00923">
    <property type="entry name" value="TAL_FSA"/>
    <property type="match status" value="1"/>
</dbReference>
<dbReference type="SUPFAM" id="SSF51569">
    <property type="entry name" value="Aldolase"/>
    <property type="match status" value="1"/>
</dbReference>
<dbReference type="PROSITE" id="PS01054">
    <property type="entry name" value="TRANSALDOLASE_1"/>
    <property type="match status" value="1"/>
</dbReference>
<reference key="1">
    <citation type="journal article" date="2002" name="Nature">
        <title>Genome sequence of the plant pathogen Ralstonia solanacearum.</title>
        <authorList>
            <person name="Salanoubat M."/>
            <person name="Genin S."/>
            <person name="Artiguenave F."/>
            <person name="Gouzy J."/>
            <person name="Mangenot S."/>
            <person name="Arlat M."/>
            <person name="Billault A."/>
            <person name="Brottier P."/>
            <person name="Camus J.-C."/>
            <person name="Cattolico L."/>
            <person name="Chandler M."/>
            <person name="Choisne N."/>
            <person name="Claudel-Renard C."/>
            <person name="Cunnac S."/>
            <person name="Demange N."/>
            <person name="Gaspin C."/>
            <person name="Lavie M."/>
            <person name="Moisan A."/>
            <person name="Robert C."/>
            <person name="Saurin W."/>
            <person name="Schiex T."/>
            <person name="Siguier P."/>
            <person name="Thebault P."/>
            <person name="Whalen M."/>
            <person name="Wincker P."/>
            <person name="Levy M."/>
            <person name="Weissenbach J."/>
            <person name="Boucher C.A."/>
        </authorList>
    </citation>
    <scope>NUCLEOTIDE SEQUENCE [LARGE SCALE GENOMIC DNA]</scope>
    <source>
        <strain>ATCC BAA-1114 / GMI1000</strain>
    </source>
</reference>